<gene>
    <name evidence="1" type="primary">ilvC</name>
    <name type="ordered locus">Dhaf_2484</name>
</gene>
<keyword id="KW-0028">Amino-acid biosynthesis</keyword>
<keyword id="KW-0100">Branched-chain amino acid biosynthesis</keyword>
<keyword id="KW-0460">Magnesium</keyword>
<keyword id="KW-0479">Metal-binding</keyword>
<keyword id="KW-0521">NADP</keyword>
<keyword id="KW-0560">Oxidoreductase</keyword>
<name>ILVC_DESHD</name>
<accession>B8FU98</accession>
<proteinExistence type="inferred from homology"/>
<protein>
    <recommendedName>
        <fullName evidence="1">Ketol-acid reductoisomerase (NADP(+))</fullName>
        <shortName evidence="1">KARI</shortName>
        <ecNumber evidence="1">1.1.1.86</ecNumber>
    </recommendedName>
    <alternativeName>
        <fullName evidence="1">Acetohydroxy-acid isomeroreductase</fullName>
        <shortName evidence="1">AHIR</shortName>
    </alternativeName>
    <alternativeName>
        <fullName evidence="1">Alpha-keto-beta-hydroxylacyl reductoisomerase</fullName>
    </alternativeName>
    <alternativeName>
        <fullName evidence="1">Ketol-acid reductoisomerase type 1</fullName>
    </alternativeName>
    <alternativeName>
        <fullName evidence="1">Ketol-acid reductoisomerase type I</fullName>
    </alternativeName>
</protein>
<organism>
    <name type="scientific">Desulfitobacterium hafniense (strain DSM 10664 / DCB-2)</name>
    <dbReference type="NCBI Taxonomy" id="272564"/>
    <lineage>
        <taxon>Bacteria</taxon>
        <taxon>Bacillati</taxon>
        <taxon>Bacillota</taxon>
        <taxon>Clostridia</taxon>
        <taxon>Eubacteriales</taxon>
        <taxon>Desulfitobacteriaceae</taxon>
        <taxon>Desulfitobacterium</taxon>
    </lineage>
</organism>
<dbReference type="EC" id="1.1.1.86" evidence="1"/>
<dbReference type="EMBL" id="CP001336">
    <property type="protein sequence ID" value="ACL20512.1"/>
    <property type="molecule type" value="Genomic_DNA"/>
</dbReference>
<dbReference type="RefSeq" id="WP_005816729.1">
    <property type="nucleotide sequence ID" value="NC_011830.1"/>
</dbReference>
<dbReference type="SMR" id="B8FU98"/>
<dbReference type="KEGG" id="dhd:Dhaf_2484"/>
<dbReference type="HOGENOM" id="CLU_033821_0_1_9"/>
<dbReference type="UniPathway" id="UPA00047">
    <property type="reaction ID" value="UER00056"/>
</dbReference>
<dbReference type="UniPathway" id="UPA00049">
    <property type="reaction ID" value="UER00060"/>
</dbReference>
<dbReference type="Proteomes" id="UP000007726">
    <property type="component" value="Chromosome"/>
</dbReference>
<dbReference type="GO" id="GO:0005829">
    <property type="term" value="C:cytosol"/>
    <property type="evidence" value="ECO:0007669"/>
    <property type="project" value="TreeGrafter"/>
</dbReference>
<dbReference type="GO" id="GO:0004455">
    <property type="term" value="F:ketol-acid reductoisomerase activity"/>
    <property type="evidence" value="ECO:0007669"/>
    <property type="project" value="UniProtKB-UniRule"/>
</dbReference>
<dbReference type="GO" id="GO:0000287">
    <property type="term" value="F:magnesium ion binding"/>
    <property type="evidence" value="ECO:0007669"/>
    <property type="project" value="UniProtKB-UniRule"/>
</dbReference>
<dbReference type="GO" id="GO:0050661">
    <property type="term" value="F:NADP binding"/>
    <property type="evidence" value="ECO:0007669"/>
    <property type="project" value="InterPro"/>
</dbReference>
<dbReference type="GO" id="GO:0009097">
    <property type="term" value="P:isoleucine biosynthetic process"/>
    <property type="evidence" value="ECO:0007669"/>
    <property type="project" value="UniProtKB-UniRule"/>
</dbReference>
<dbReference type="GO" id="GO:0009099">
    <property type="term" value="P:L-valine biosynthetic process"/>
    <property type="evidence" value="ECO:0007669"/>
    <property type="project" value="UniProtKB-UniRule"/>
</dbReference>
<dbReference type="FunFam" id="3.40.50.720:FF:000023">
    <property type="entry name" value="Ketol-acid reductoisomerase (NADP(+))"/>
    <property type="match status" value="1"/>
</dbReference>
<dbReference type="Gene3D" id="6.10.240.10">
    <property type="match status" value="1"/>
</dbReference>
<dbReference type="Gene3D" id="3.40.50.720">
    <property type="entry name" value="NAD(P)-binding Rossmann-like Domain"/>
    <property type="match status" value="1"/>
</dbReference>
<dbReference type="HAMAP" id="MF_00435">
    <property type="entry name" value="IlvC"/>
    <property type="match status" value="1"/>
</dbReference>
<dbReference type="InterPro" id="IPR008927">
    <property type="entry name" value="6-PGluconate_DH-like_C_sf"/>
</dbReference>
<dbReference type="InterPro" id="IPR013023">
    <property type="entry name" value="KARI"/>
</dbReference>
<dbReference type="InterPro" id="IPR000506">
    <property type="entry name" value="KARI_C"/>
</dbReference>
<dbReference type="InterPro" id="IPR013116">
    <property type="entry name" value="KARI_N"/>
</dbReference>
<dbReference type="InterPro" id="IPR014359">
    <property type="entry name" value="KARI_prok"/>
</dbReference>
<dbReference type="InterPro" id="IPR036291">
    <property type="entry name" value="NAD(P)-bd_dom_sf"/>
</dbReference>
<dbReference type="NCBIfam" id="TIGR00465">
    <property type="entry name" value="ilvC"/>
    <property type="match status" value="1"/>
</dbReference>
<dbReference type="NCBIfam" id="NF004017">
    <property type="entry name" value="PRK05479.1"/>
    <property type="match status" value="1"/>
</dbReference>
<dbReference type="NCBIfam" id="NF009940">
    <property type="entry name" value="PRK13403.1"/>
    <property type="match status" value="1"/>
</dbReference>
<dbReference type="PANTHER" id="PTHR21371">
    <property type="entry name" value="KETOL-ACID REDUCTOISOMERASE, MITOCHONDRIAL"/>
    <property type="match status" value="1"/>
</dbReference>
<dbReference type="PANTHER" id="PTHR21371:SF1">
    <property type="entry name" value="KETOL-ACID REDUCTOISOMERASE, MITOCHONDRIAL"/>
    <property type="match status" value="1"/>
</dbReference>
<dbReference type="Pfam" id="PF01450">
    <property type="entry name" value="KARI_C"/>
    <property type="match status" value="1"/>
</dbReference>
<dbReference type="Pfam" id="PF07991">
    <property type="entry name" value="KARI_N"/>
    <property type="match status" value="1"/>
</dbReference>
<dbReference type="PIRSF" id="PIRSF000116">
    <property type="entry name" value="IlvC_gammaproteo"/>
    <property type="match status" value="1"/>
</dbReference>
<dbReference type="SUPFAM" id="SSF48179">
    <property type="entry name" value="6-phosphogluconate dehydrogenase C-terminal domain-like"/>
    <property type="match status" value="1"/>
</dbReference>
<dbReference type="SUPFAM" id="SSF51735">
    <property type="entry name" value="NAD(P)-binding Rossmann-fold domains"/>
    <property type="match status" value="1"/>
</dbReference>
<dbReference type="PROSITE" id="PS51851">
    <property type="entry name" value="KARI_C"/>
    <property type="match status" value="1"/>
</dbReference>
<dbReference type="PROSITE" id="PS51850">
    <property type="entry name" value="KARI_N"/>
    <property type="match status" value="1"/>
</dbReference>
<evidence type="ECO:0000255" key="1">
    <source>
        <dbReference type="HAMAP-Rule" id="MF_00435"/>
    </source>
</evidence>
<evidence type="ECO:0000255" key="2">
    <source>
        <dbReference type="PROSITE-ProRule" id="PRU01197"/>
    </source>
</evidence>
<evidence type="ECO:0000255" key="3">
    <source>
        <dbReference type="PROSITE-ProRule" id="PRU01198"/>
    </source>
</evidence>
<feature type="chain" id="PRO_1000190946" description="Ketol-acid reductoisomerase (NADP(+))">
    <location>
        <begin position="1"/>
        <end position="333"/>
    </location>
</feature>
<feature type="domain" description="KARI N-terminal Rossmann" evidence="2">
    <location>
        <begin position="2"/>
        <end position="182"/>
    </location>
</feature>
<feature type="domain" description="KARI C-terminal knotted" evidence="3">
    <location>
        <begin position="183"/>
        <end position="328"/>
    </location>
</feature>
<feature type="active site" evidence="1">
    <location>
        <position position="108"/>
    </location>
</feature>
<feature type="binding site" evidence="1">
    <location>
        <begin position="25"/>
        <end position="28"/>
    </location>
    <ligand>
        <name>NADP(+)</name>
        <dbReference type="ChEBI" id="CHEBI:58349"/>
    </ligand>
</feature>
<feature type="binding site" evidence="1">
    <location>
        <position position="48"/>
    </location>
    <ligand>
        <name>NADP(+)</name>
        <dbReference type="ChEBI" id="CHEBI:58349"/>
    </ligand>
</feature>
<feature type="binding site" evidence="1">
    <location>
        <position position="51"/>
    </location>
    <ligand>
        <name>NADP(+)</name>
        <dbReference type="ChEBI" id="CHEBI:58349"/>
    </ligand>
</feature>
<feature type="binding site" evidence="1">
    <location>
        <begin position="83"/>
        <end position="86"/>
    </location>
    <ligand>
        <name>NADP(+)</name>
        <dbReference type="ChEBI" id="CHEBI:58349"/>
    </ligand>
</feature>
<feature type="binding site" evidence="1">
    <location>
        <position position="134"/>
    </location>
    <ligand>
        <name>NADP(+)</name>
        <dbReference type="ChEBI" id="CHEBI:58349"/>
    </ligand>
</feature>
<feature type="binding site" evidence="1">
    <location>
        <position position="191"/>
    </location>
    <ligand>
        <name>Mg(2+)</name>
        <dbReference type="ChEBI" id="CHEBI:18420"/>
        <label>1</label>
    </ligand>
</feature>
<feature type="binding site" evidence="1">
    <location>
        <position position="191"/>
    </location>
    <ligand>
        <name>Mg(2+)</name>
        <dbReference type="ChEBI" id="CHEBI:18420"/>
        <label>2</label>
    </ligand>
</feature>
<feature type="binding site" evidence="1">
    <location>
        <position position="195"/>
    </location>
    <ligand>
        <name>Mg(2+)</name>
        <dbReference type="ChEBI" id="CHEBI:18420"/>
        <label>1</label>
    </ligand>
</feature>
<feature type="binding site" evidence="1">
    <location>
        <position position="227"/>
    </location>
    <ligand>
        <name>Mg(2+)</name>
        <dbReference type="ChEBI" id="CHEBI:18420"/>
        <label>2</label>
    </ligand>
</feature>
<feature type="binding site" evidence="1">
    <location>
        <position position="231"/>
    </location>
    <ligand>
        <name>Mg(2+)</name>
        <dbReference type="ChEBI" id="CHEBI:18420"/>
        <label>2</label>
    </ligand>
</feature>
<feature type="binding site" evidence="1">
    <location>
        <position position="252"/>
    </location>
    <ligand>
        <name>substrate</name>
    </ligand>
</feature>
<reference key="1">
    <citation type="journal article" date="2012" name="BMC Microbiol.">
        <title>Genome sequence of Desulfitobacterium hafniense DCB-2, a Gram-positive anaerobe capable of dehalogenation and metal reduction.</title>
        <authorList>
            <person name="Kim S.H."/>
            <person name="Harzman C."/>
            <person name="Davis J.K."/>
            <person name="Hutcheson R."/>
            <person name="Broderick J.B."/>
            <person name="Marsh T.L."/>
            <person name="Tiedje J.M."/>
        </authorList>
    </citation>
    <scope>NUCLEOTIDE SEQUENCE [LARGE SCALE GENOMIC DNA]</scope>
    <source>
        <strain>DSM 10664 / DCB-2</strain>
    </source>
</reference>
<comment type="function">
    <text evidence="1">Involved in the biosynthesis of branched-chain amino acids (BCAA). Catalyzes an alkyl-migration followed by a ketol-acid reduction of (S)-2-acetolactate (S2AL) to yield (R)-2,3-dihydroxy-isovalerate. In the isomerase reaction, S2AL is rearranged via a Mg-dependent methyl migration to produce 3-hydroxy-3-methyl-2-ketobutyrate (HMKB). In the reductase reaction, this 2-ketoacid undergoes a metal-dependent reduction by NADPH to yield (R)-2,3-dihydroxy-isovalerate.</text>
</comment>
<comment type="catalytic activity">
    <reaction evidence="1">
        <text>(2R)-2,3-dihydroxy-3-methylbutanoate + NADP(+) = (2S)-2-acetolactate + NADPH + H(+)</text>
        <dbReference type="Rhea" id="RHEA:22068"/>
        <dbReference type="ChEBI" id="CHEBI:15378"/>
        <dbReference type="ChEBI" id="CHEBI:49072"/>
        <dbReference type="ChEBI" id="CHEBI:57783"/>
        <dbReference type="ChEBI" id="CHEBI:58349"/>
        <dbReference type="ChEBI" id="CHEBI:58476"/>
        <dbReference type="EC" id="1.1.1.86"/>
    </reaction>
</comment>
<comment type="catalytic activity">
    <reaction evidence="1">
        <text>(2R,3R)-2,3-dihydroxy-3-methylpentanoate + NADP(+) = (S)-2-ethyl-2-hydroxy-3-oxobutanoate + NADPH + H(+)</text>
        <dbReference type="Rhea" id="RHEA:13493"/>
        <dbReference type="ChEBI" id="CHEBI:15378"/>
        <dbReference type="ChEBI" id="CHEBI:49256"/>
        <dbReference type="ChEBI" id="CHEBI:49258"/>
        <dbReference type="ChEBI" id="CHEBI:57783"/>
        <dbReference type="ChEBI" id="CHEBI:58349"/>
        <dbReference type="EC" id="1.1.1.86"/>
    </reaction>
</comment>
<comment type="cofactor">
    <cofactor evidence="1">
        <name>Mg(2+)</name>
        <dbReference type="ChEBI" id="CHEBI:18420"/>
    </cofactor>
    <text evidence="1">Binds 2 magnesium ions per subunit.</text>
</comment>
<comment type="pathway">
    <text evidence="1">Amino-acid biosynthesis; L-isoleucine biosynthesis; L-isoleucine from 2-oxobutanoate: step 2/4.</text>
</comment>
<comment type="pathway">
    <text evidence="1">Amino-acid biosynthesis; L-valine biosynthesis; L-valine from pyruvate: step 2/4.</text>
</comment>
<comment type="similarity">
    <text evidence="1">Belongs to the ketol-acid reductoisomerase family.</text>
</comment>
<sequence>MAKMYYDSDASLELLQGKTIAVMGYGSQGHAQAQNLKDSGLNVVIGLRADSRRWKQAEAAGLKVATVAEAAAQADLIQILLPDERQASVYEKEIKPHLTAGKCLVFSHGFNIHFGQIVPPADVDVFMVAPKSPGHLVRRTYEEGAGVPGLIAVHQDASGRAYDLALAYAKGIGCTRAGVLETTFKEETETDLFGEQAVLCGGVSELIRAGFDTLVEAGYQPESAYFECLHELKLIVDLIYEGGISRMRYSISDTAEYGDMMIGKRIITDETRKEMKKVLAEIQDGTFAKNWLLENQINRPSFNAIERKDAEHPIEKVGAELRAMMPFIKKPGE</sequence>